<gene>
    <name evidence="1" type="primary">mnmC</name>
    <name type="ordered locus">BPSL0003</name>
</gene>
<organism>
    <name type="scientific">Burkholderia pseudomallei (strain K96243)</name>
    <dbReference type="NCBI Taxonomy" id="272560"/>
    <lineage>
        <taxon>Bacteria</taxon>
        <taxon>Pseudomonadati</taxon>
        <taxon>Pseudomonadota</taxon>
        <taxon>Betaproteobacteria</taxon>
        <taxon>Burkholderiales</taxon>
        <taxon>Burkholderiaceae</taxon>
        <taxon>Burkholderia</taxon>
        <taxon>pseudomallei group</taxon>
    </lineage>
</organism>
<feature type="chain" id="PRO_0000347959" description="tRNA 5-methylaminomethyl-2-thiouridine biosynthesis bifunctional protein MnmC">
    <location>
        <begin position="1"/>
        <end position="660"/>
    </location>
</feature>
<feature type="region of interest" description="tRNA (mnm(5)s(2)U34)-methyltransferase">
    <location>
        <begin position="1"/>
        <end position="242"/>
    </location>
</feature>
<feature type="region of interest" description="FAD-dependent cmnm(5)s(2)U34 oxidoreductase">
    <location>
        <begin position="266"/>
        <end position="660"/>
    </location>
</feature>
<name>MNMC_BURPS</name>
<protein>
    <recommendedName>
        <fullName evidence="1">tRNA 5-methylaminomethyl-2-thiouridine biosynthesis bifunctional protein MnmC</fullName>
        <shortName evidence="1">tRNA mnm(5)s(2)U biosynthesis bifunctional protein</shortName>
    </recommendedName>
    <domain>
        <recommendedName>
            <fullName evidence="1">tRNA (mnm(5)s(2)U34)-methyltransferase</fullName>
            <ecNumber evidence="1">2.1.1.61</ecNumber>
        </recommendedName>
    </domain>
    <domain>
        <recommendedName>
            <fullName evidence="1">FAD-dependent cmnm(5)s(2)U34 oxidoreductase</fullName>
            <ecNumber evidence="1">1.5.-.-</ecNumber>
        </recommendedName>
    </domain>
</protein>
<accession>Q63Z34</accession>
<reference key="1">
    <citation type="journal article" date="2004" name="Proc. Natl. Acad. Sci. U.S.A.">
        <title>Genomic plasticity of the causative agent of melioidosis, Burkholderia pseudomallei.</title>
        <authorList>
            <person name="Holden M.T.G."/>
            <person name="Titball R.W."/>
            <person name="Peacock S.J."/>
            <person name="Cerdeno-Tarraga A.-M."/>
            <person name="Atkins T."/>
            <person name="Crossman L.C."/>
            <person name="Pitt T."/>
            <person name="Churcher C."/>
            <person name="Mungall K.L."/>
            <person name="Bentley S.D."/>
            <person name="Sebaihia M."/>
            <person name="Thomson N.R."/>
            <person name="Bason N."/>
            <person name="Beacham I.R."/>
            <person name="Brooks K."/>
            <person name="Brown K.A."/>
            <person name="Brown N.F."/>
            <person name="Challis G.L."/>
            <person name="Cherevach I."/>
            <person name="Chillingworth T."/>
            <person name="Cronin A."/>
            <person name="Crossett B."/>
            <person name="Davis P."/>
            <person name="DeShazer D."/>
            <person name="Feltwell T."/>
            <person name="Fraser A."/>
            <person name="Hance Z."/>
            <person name="Hauser H."/>
            <person name="Holroyd S."/>
            <person name="Jagels K."/>
            <person name="Keith K.E."/>
            <person name="Maddison M."/>
            <person name="Moule S."/>
            <person name="Price C."/>
            <person name="Quail M.A."/>
            <person name="Rabbinowitsch E."/>
            <person name="Rutherford K."/>
            <person name="Sanders M."/>
            <person name="Simmonds M."/>
            <person name="Songsivilai S."/>
            <person name="Stevens K."/>
            <person name="Tumapa S."/>
            <person name="Vesaratchavest M."/>
            <person name="Whitehead S."/>
            <person name="Yeats C."/>
            <person name="Barrell B.G."/>
            <person name="Oyston P.C.F."/>
            <person name="Parkhill J."/>
        </authorList>
    </citation>
    <scope>NUCLEOTIDE SEQUENCE [LARGE SCALE GENOMIC DNA]</scope>
    <source>
        <strain>K96243</strain>
    </source>
</reference>
<dbReference type="EC" id="2.1.1.61" evidence="1"/>
<dbReference type="EC" id="1.5.-.-" evidence="1"/>
<dbReference type="EMBL" id="BX571965">
    <property type="protein sequence ID" value="CAH33986.1"/>
    <property type="status" value="ALT_INIT"/>
    <property type="molecule type" value="Genomic_DNA"/>
</dbReference>
<dbReference type="RefSeq" id="WP_004554661.1">
    <property type="nucleotide sequence ID" value="NZ_CP009538.1"/>
</dbReference>
<dbReference type="RefSeq" id="YP_106628.2">
    <property type="nucleotide sequence ID" value="NC_006350.1"/>
</dbReference>
<dbReference type="SMR" id="Q63Z34"/>
<dbReference type="STRING" id="272560.BPSL0003"/>
<dbReference type="KEGG" id="bps:BPSL0003"/>
<dbReference type="PATRIC" id="fig|272560.51.peg.1747"/>
<dbReference type="eggNOG" id="COG0665">
    <property type="taxonomic scope" value="Bacteria"/>
</dbReference>
<dbReference type="eggNOG" id="COG4121">
    <property type="taxonomic scope" value="Bacteria"/>
</dbReference>
<dbReference type="Proteomes" id="UP000000605">
    <property type="component" value="Chromosome 1"/>
</dbReference>
<dbReference type="GO" id="GO:0005737">
    <property type="term" value="C:cytoplasm"/>
    <property type="evidence" value="ECO:0007669"/>
    <property type="project" value="UniProtKB-SubCell"/>
</dbReference>
<dbReference type="GO" id="GO:0050660">
    <property type="term" value="F:flavin adenine dinucleotide binding"/>
    <property type="evidence" value="ECO:0007669"/>
    <property type="project" value="UniProtKB-UniRule"/>
</dbReference>
<dbReference type="GO" id="GO:0016645">
    <property type="term" value="F:oxidoreductase activity, acting on the CH-NH group of donors"/>
    <property type="evidence" value="ECO:0007669"/>
    <property type="project" value="InterPro"/>
</dbReference>
<dbReference type="GO" id="GO:0004808">
    <property type="term" value="F:tRNA (5-methylaminomethyl-2-thiouridylate)(34)-methyltransferase activity"/>
    <property type="evidence" value="ECO:0007669"/>
    <property type="project" value="UniProtKB-EC"/>
</dbReference>
<dbReference type="GO" id="GO:0032259">
    <property type="term" value="P:methylation"/>
    <property type="evidence" value="ECO:0007669"/>
    <property type="project" value="UniProtKB-KW"/>
</dbReference>
<dbReference type="GO" id="GO:0002097">
    <property type="term" value="P:tRNA wobble base modification"/>
    <property type="evidence" value="ECO:0007669"/>
    <property type="project" value="UniProtKB-UniRule"/>
</dbReference>
<dbReference type="Gene3D" id="3.30.9.10">
    <property type="entry name" value="D-Amino Acid Oxidase, subunit A, domain 2"/>
    <property type="match status" value="1"/>
</dbReference>
<dbReference type="Gene3D" id="3.50.50.60">
    <property type="entry name" value="FAD/NAD(P)-binding domain"/>
    <property type="match status" value="1"/>
</dbReference>
<dbReference type="Gene3D" id="3.40.50.150">
    <property type="entry name" value="Vaccinia Virus protein VP39"/>
    <property type="match status" value="1"/>
</dbReference>
<dbReference type="HAMAP" id="MF_01102">
    <property type="entry name" value="MnmC"/>
    <property type="match status" value="1"/>
</dbReference>
<dbReference type="InterPro" id="IPR006076">
    <property type="entry name" value="FAD-dep_OxRdtase"/>
</dbReference>
<dbReference type="InterPro" id="IPR036188">
    <property type="entry name" value="FAD/NAD-bd_sf"/>
</dbReference>
<dbReference type="InterPro" id="IPR008471">
    <property type="entry name" value="MnmC-like_methylTransf"/>
</dbReference>
<dbReference type="InterPro" id="IPR029063">
    <property type="entry name" value="SAM-dependent_MTases_sf"/>
</dbReference>
<dbReference type="InterPro" id="IPR023032">
    <property type="entry name" value="tRNA_MAMT_biosynth_bifunc_MnmC"/>
</dbReference>
<dbReference type="InterPro" id="IPR047785">
    <property type="entry name" value="tRNA_MNMC2"/>
</dbReference>
<dbReference type="InterPro" id="IPR017610">
    <property type="entry name" value="tRNA_S-uridine_synth_MnmC_C"/>
</dbReference>
<dbReference type="NCBIfam" id="TIGR03197">
    <property type="entry name" value="MnmC_Cterm"/>
    <property type="match status" value="1"/>
</dbReference>
<dbReference type="NCBIfam" id="NF002481">
    <property type="entry name" value="PRK01747.1-2"/>
    <property type="match status" value="1"/>
</dbReference>
<dbReference type="NCBIfam" id="NF002483">
    <property type="entry name" value="PRK01747.1-4"/>
    <property type="match status" value="1"/>
</dbReference>
<dbReference type="NCBIfam" id="NF033855">
    <property type="entry name" value="tRNA_MNMC2"/>
    <property type="match status" value="1"/>
</dbReference>
<dbReference type="PANTHER" id="PTHR13847">
    <property type="entry name" value="SARCOSINE DEHYDROGENASE-RELATED"/>
    <property type="match status" value="1"/>
</dbReference>
<dbReference type="PANTHER" id="PTHR13847:SF283">
    <property type="entry name" value="TRNA 5-METHYLAMINOMETHYL-2-THIOURIDINE BIOSYNTHESIS BIFUNCTIONAL PROTEIN MNMC"/>
    <property type="match status" value="1"/>
</dbReference>
<dbReference type="Pfam" id="PF01266">
    <property type="entry name" value="DAO"/>
    <property type="match status" value="1"/>
</dbReference>
<dbReference type="Pfam" id="PF05430">
    <property type="entry name" value="Methyltransf_30"/>
    <property type="match status" value="1"/>
</dbReference>
<dbReference type="SUPFAM" id="SSF54373">
    <property type="entry name" value="FAD-linked reductases, C-terminal domain"/>
    <property type="match status" value="1"/>
</dbReference>
<dbReference type="SUPFAM" id="SSF51905">
    <property type="entry name" value="FAD/NAD(P)-binding domain"/>
    <property type="match status" value="1"/>
</dbReference>
<proteinExistence type="inferred from homology"/>
<evidence type="ECO:0000255" key="1">
    <source>
        <dbReference type="HAMAP-Rule" id="MF_01102"/>
    </source>
</evidence>
<evidence type="ECO:0000305" key="2"/>
<sequence length="660" mass="70743">MTDRIVPATLVFREDGTVVSPLYGDIYHSAAGALAQADHVFIRGNGLPERWRHERAFTIIETGFGTGCNFLATWAAWRADPSHCERLHFVSVEKHPFAREDLRRAAAHIVAYTTITTITPIAPLVDELANAWPALTPGVHRLEFDDGRITLTLVFGDALDVLPNLALRAHAFYLDGFAPSKNADLWSPAIFKSLAKLADERATFATYTSSGAVKRALDEAGFAYRKVDGFAGKRAMLVGEFAPRWRVRRHEPPRAFSTDRRDAIVIGAGLAGCAVVERLAARGWHVTLIERRERIASEASGNPAGVFHPMIARDDNLAARLSRAGFLHALHRWRALERAGHAFSRSTHGLVQLATSDDEFERMRESIDALGVPAELASALSRDDARALLRTDVAHGGWLFAQGGSISPAALAAAQCAAAGDRLSRIVGVEIARLERGGDGRWRALDASGATIAQASVVVVANAADAARIAGLRHAPTQRVRGQLTLLPPGSAPAVPLPVIGDGYVVPLANGVTLTGATYEPDDTDATPREAGHRENLERLERLLPAFSANALDAGALAGRVGFRCVASDRLPLVGELGDEAAAAREAAALTGARLRDVPRATGLYGAFGYGSRGLVWAALGAELIAAQIDGEPWPLERELAEAIDPARFLVRALRHGRVA</sequence>
<comment type="function">
    <text evidence="1">Catalyzes the last two steps in the biosynthesis of 5-methylaminomethyl-2-thiouridine (mnm(5)s(2)U) at the wobble position (U34) in tRNA. Catalyzes the FAD-dependent demodification of cmnm(5)s(2)U34 to nm(5)s(2)U34, followed by the transfer of a methyl group from S-adenosyl-L-methionine to nm(5)s(2)U34, to form mnm(5)s(2)U34.</text>
</comment>
<comment type="catalytic activity">
    <reaction evidence="1">
        <text>5-aminomethyl-2-thiouridine(34) in tRNA + S-adenosyl-L-methionine = 5-methylaminomethyl-2-thiouridine(34) in tRNA + S-adenosyl-L-homocysteine + H(+)</text>
        <dbReference type="Rhea" id="RHEA:19569"/>
        <dbReference type="Rhea" id="RHEA-COMP:10195"/>
        <dbReference type="Rhea" id="RHEA-COMP:10197"/>
        <dbReference type="ChEBI" id="CHEBI:15378"/>
        <dbReference type="ChEBI" id="CHEBI:57856"/>
        <dbReference type="ChEBI" id="CHEBI:59789"/>
        <dbReference type="ChEBI" id="CHEBI:74454"/>
        <dbReference type="ChEBI" id="CHEBI:74455"/>
        <dbReference type="EC" id="2.1.1.61"/>
    </reaction>
</comment>
<comment type="cofactor">
    <cofactor evidence="1">
        <name>FAD</name>
        <dbReference type="ChEBI" id="CHEBI:57692"/>
    </cofactor>
</comment>
<comment type="subcellular location">
    <subcellularLocation>
        <location evidence="1">Cytoplasm</location>
    </subcellularLocation>
</comment>
<comment type="similarity">
    <text evidence="1">In the N-terminal section; belongs to the methyltransferase superfamily. tRNA (mnm(5)s(2)U34)-methyltransferase family.</text>
</comment>
<comment type="similarity">
    <text evidence="1">In the C-terminal section; belongs to the DAO family.</text>
</comment>
<comment type="sequence caution" evidence="2">
    <conflict type="erroneous initiation">
        <sequence resource="EMBL-CDS" id="CAH33986"/>
    </conflict>
</comment>
<keyword id="KW-0963">Cytoplasm</keyword>
<keyword id="KW-0274">FAD</keyword>
<keyword id="KW-0285">Flavoprotein</keyword>
<keyword id="KW-0489">Methyltransferase</keyword>
<keyword id="KW-0511">Multifunctional enzyme</keyword>
<keyword id="KW-0560">Oxidoreductase</keyword>
<keyword id="KW-1185">Reference proteome</keyword>
<keyword id="KW-0949">S-adenosyl-L-methionine</keyword>
<keyword id="KW-0808">Transferase</keyword>
<keyword id="KW-0819">tRNA processing</keyword>